<organism>
    <name type="scientific">Serratia proteamaculans (strain 568)</name>
    <dbReference type="NCBI Taxonomy" id="399741"/>
    <lineage>
        <taxon>Bacteria</taxon>
        <taxon>Pseudomonadati</taxon>
        <taxon>Pseudomonadota</taxon>
        <taxon>Gammaproteobacteria</taxon>
        <taxon>Enterobacterales</taxon>
        <taxon>Yersiniaceae</taxon>
        <taxon>Serratia</taxon>
    </lineage>
</organism>
<name>FABH_SERP5</name>
<sequence>MYTKILGTGSYLPVQVRTNADLEKMVDTSDEWIVSRTGIRERRIAAADETVATMGFHAAEKALEMAGVAKEDIGLIVVATTTSTHAFPSSACQVQQMLGIKDCAAFDLAAACAGFTYALSVADQYVKNGAVKHALVIGADVLSRTLDPEDRGTIILFGDGAGAVLLGASEEPGILSTHLHADGSYGGLLTLPFKDRQDQDKPAYVTMAGNEVFKVAVTELAHIVDETLQANNLDRSALDWLVPHQANLRIISATAKKLGMGMDKVVVTLDRHGNTSAASVPAALDEAVRDGRIQRGQLVLLEAFGGGFTWGSALVRF</sequence>
<keyword id="KW-0012">Acyltransferase</keyword>
<keyword id="KW-0963">Cytoplasm</keyword>
<keyword id="KW-0275">Fatty acid biosynthesis</keyword>
<keyword id="KW-0276">Fatty acid metabolism</keyword>
<keyword id="KW-0444">Lipid biosynthesis</keyword>
<keyword id="KW-0443">Lipid metabolism</keyword>
<keyword id="KW-0511">Multifunctional enzyme</keyword>
<keyword id="KW-0808">Transferase</keyword>
<feature type="chain" id="PRO_1000070244" description="Beta-ketoacyl-[acyl-carrier-protein] synthase III">
    <location>
        <begin position="1"/>
        <end position="317"/>
    </location>
</feature>
<feature type="region of interest" description="ACP-binding" evidence="1">
    <location>
        <begin position="245"/>
        <end position="249"/>
    </location>
</feature>
<feature type="active site" evidence="1">
    <location>
        <position position="112"/>
    </location>
</feature>
<feature type="active site" evidence="1">
    <location>
        <position position="244"/>
    </location>
</feature>
<feature type="active site" evidence="1">
    <location>
        <position position="274"/>
    </location>
</feature>
<protein>
    <recommendedName>
        <fullName evidence="1">Beta-ketoacyl-[acyl-carrier-protein] synthase III</fullName>
        <shortName evidence="1">Beta-ketoacyl-ACP synthase III</shortName>
        <shortName evidence="1">KAS III</shortName>
        <ecNumber evidence="1">2.3.1.180</ecNumber>
    </recommendedName>
    <alternativeName>
        <fullName evidence="1">3-oxoacyl-[acyl-carrier-protein] synthase 3</fullName>
    </alternativeName>
    <alternativeName>
        <fullName evidence="1">3-oxoacyl-[acyl-carrier-protein] synthase III</fullName>
    </alternativeName>
</protein>
<accession>A8GD17</accession>
<proteinExistence type="inferred from homology"/>
<gene>
    <name evidence="1" type="primary">fabH</name>
    <name type="ordered locus">Spro_1904</name>
</gene>
<dbReference type="EC" id="2.3.1.180" evidence="1"/>
<dbReference type="EMBL" id="CP000826">
    <property type="protein sequence ID" value="ABV41007.1"/>
    <property type="molecule type" value="Genomic_DNA"/>
</dbReference>
<dbReference type="SMR" id="A8GD17"/>
<dbReference type="STRING" id="399741.Spro_1904"/>
<dbReference type="KEGG" id="spe:Spro_1904"/>
<dbReference type="eggNOG" id="COG0332">
    <property type="taxonomic scope" value="Bacteria"/>
</dbReference>
<dbReference type="HOGENOM" id="CLU_039592_3_1_6"/>
<dbReference type="OrthoDB" id="9815506at2"/>
<dbReference type="UniPathway" id="UPA00094"/>
<dbReference type="GO" id="GO:0005737">
    <property type="term" value="C:cytoplasm"/>
    <property type="evidence" value="ECO:0007669"/>
    <property type="project" value="UniProtKB-SubCell"/>
</dbReference>
<dbReference type="GO" id="GO:0004315">
    <property type="term" value="F:3-oxoacyl-[acyl-carrier-protein] synthase activity"/>
    <property type="evidence" value="ECO:0007669"/>
    <property type="project" value="InterPro"/>
</dbReference>
<dbReference type="GO" id="GO:0033818">
    <property type="term" value="F:beta-ketoacyl-acyl-carrier-protein synthase III activity"/>
    <property type="evidence" value="ECO:0007669"/>
    <property type="project" value="UniProtKB-UniRule"/>
</dbReference>
<dbReference type="GO" id="GO:0006633">
    <property type="term" value="P:fatty acid biosynthetic process"/>
    <property type="evidence" value="ECO:0007669"/>
    <property type="project" value="UniProtKB-UniRule"/>
</dbReference>
<dbReference type="CDD" id="cd00830">
    <property type="entry name" value="KAS_III"/>
    <property type="match status" value="1"/>
</dbReference>
<dbReference type="FunFam" id="3.40.47.10:FF:000004">
    <property type="entry name" value="3-oxoacyl-[acyl-carrier-protein] synthase 3"/>
    <property type="match status" value="1"/>
</dbReference>
<dbReference type="Gene3D" id="3.40.47.10">
    <property type="match status" value="1"/>
</dbReference>
<dbReference type="HAMAP" id="MF_01815">
    <property type="entry name" value="FabH"/>
    <property type="match status" value="1"/>
</dbReference>
<dbReference type="InterPro" id="IPR013747">
    <property type="entry name" value="ACP_syn_III_C"/>
</dbReference>
<dbReference type="InterPro" id="IPR013751">
    <property type="entry name" value="ACP_syn_III_N"/>
</dbReference>
<dbReference type="InterPro" id="IPR004655">
    <property type="entry name" value="FabH"/>
</dbReference>
<dbReference type="InterPro" id="IPR016039">
    <property type="entry name" value="Thiolase-like"/>
</dbReference>
<dbReference type="NCBIfam" id="TIGR00747">
    <property type="entry name" value="fabH"/>
    <property type="match status" value="1"/>
</dbReference>
<dbReference type="NCBIfam" id="NF006829">
    <property type="entry name" value="PRK09352.1"/>
    <property type="match status" value="1"/>
</dbReference>
<dbReference type="PANTHER" id="PTHR43091">
    <property type="entry name" value="3-OXOACYL-[ACYL-CARRIER-PROTEIN] SYNTHASE"/>
    <property type="match status" value="1"/>
</dbReference>
<dbReference type="PANTHER" id="PTHR43091:SF1">
    <property type="entry name" value="BETA-KETOACYL-[ACYL-CARRIER-PROTEIN] SYNTHASE III, CHLOROPLASTIC"/>
    <property type="match status" value="1"/>
</dbReference>
<dbReference type="Pfam" id="PF08545">
    <property type="entry name" value="ACP_syn_III"/>
    <property type="match status" value="1"/>
</dbReference>
<dbReference type="Pfam" id="PF08541">
    <property type="entry name" value="ACP_syn_III_C"/>
    <property type="match status" value="1"/>
</dbReference>
<dbReference type="SUPFAM" id="SSF53901">
    <property type="entry name" value="Thiolase-like"/>
    <property type="match status" value="1"/>
</dbReference>
<evidence type="ECO:0000255" key="1">
    <source>
        <dbReference type="HAMAP-Rule" id="MF_01815"/>
    </source>
</evidence>
<reference key="1">
    <citation type="submission" date="2007-09" db="EMBL/GenBank/DDBJ databases">
        <title>Complete sequence of chromosome of Serratia proteamaculans 568.</title>
        <authorList>
            <consortium name="US DOE Joint Genome Institute"/>
            <person name="Copeland A."/>
            <person name="Lucas S."/>
            <person name="Lapidus A."/>
            <person name="Barry K."/>
            <person name="Glavina del Rio T."/>
            <person name="Dalin E."/>
            <person name="Tice H."/>
            <person name="Pitluck S."/>
            <person name="Chain P."/>
            <person name="Malfatti S."/>
            <person name="Shin M."/>
            <person name="Vergez L."/>
            <person name="Schmutz J."/>
            <person name="Larimer F."/>
            <person name="Land M."/>
            <person name="Hauser L."/>
            <person name="Kyrpides N."/>
            <person name="Kim E."/>
            <person name="Taghavi S."/>
            <person name="Newman L."/>
            <person name="Vangronsveld J."/>
            <person name="van der Lelie D."/>
            <person name="Richardson P."/>
        </authorList>
    </citation>
    <scope>NUCLEOTIDE SEQUENCE [LARGE SCALE GENOMIC DNA]</scope>
    <source>
        <strain>568</strain>
    </source>
</reference>
<comment type="function">
    <text evidence="1">Catalyzes the condensation reaction of fatty acid synthesis by the addition to an acyl acceptor of two carbons from malonyl-ACP. Catalyzes the first condensation reaction which initiates fatty acid synthesis and may therefore play a role in governing the total rate of fatty acid production. Possesses both acetoacetyl-ACP synthase and acetyl transacylase activities. Its substrate specificity determines the biosynthesis of branched-chain and/or straight-chain of fatty acids.</text>
</comment>
<comment type="catalytic activity">
    <reaction evidence="1">
        <text>malonyl-[ACP] + acetyl-CoA + H(+) = 3-oxobutanoyl-[ACP] + CO2 + CoA</text>
        <dbReference type="Rhea" id="RHEA:12080"/>
        <dbReference type="Rhea" id="RHEA-COMP:9623"/>
        <dbReference type="Rhea" id="RHEA-COMP:9625"/>
        <dbReference type="ChEBI" id="CHEBI:15378"/>
        <dbReference type="ChEBI" id="CHEBI:16526"/>
        <dbReference type="ChEBI" id="CHEBI:57287"/>
        <dbReference type="ChEBI" id="CHEBI:57288"/>
        <dbReference type="ChEBI" id="CHEBI:78449"/>
        <dbReference type="ChEBI" id="CHEBI:78450"/>
        <dbReference type="EC" id="2.3.1.180"/>
    </reaction>
</comment>
<comment type="pathway">
    <text evidence="1">Lipid metabolism; fatty acid biosynthesis.</text>
</comment>
<comment type="subunit">
    <text evidence="1">Homodimer.</text>
</comment>
<comment type="subcellular location">
    <subcellularLocation>
        <location evidence="1">Cytoplasm</location>
    </subcellularLocation>
</comment>
<comment type="domain">
    <text evidence="1">The last Arg residue of the ACP-binding site is essential for the weak association between ACP/AcpP and FabH.</text>
</comment>
<comment type="similarity">
    <text evidence="1">Belongs to the thiolase-like superfamily. FabH family.</text>
</comment>